<organism>
    <name type="scientific">Mesoplasma florum (strain ATCC 33453 / NBRC 100688 / NCTC 11704 / L1)</name>
    <name type="common">Acholeplasma florum</name>
    <dbReference type="NCBI Taxonomy" id="265311"/>
    <lineage>
        <taxon>Bacteria</taxon>
        <taxon>Bacillati</taxon>
        <taxon>Mycoplasmatota</taxon>
        <taxon>Mollicutes</taxon>
        <taxon>Entomoplasmatales</taxon>
        <taxon>Entomoplasmataceae</taxon>
        <taxon>Mesoplasma</taxon>
    </lineage>
</organism>
<keyword id="KW-0963">Cytoplasm</keyword>
<keyword id="KW-0488">Methylation</keyword>
<keyword id="KW-0648">Protein biosynthesis</keyword>
<keyword id="KW-1185">Reference proteome</keyword>
<feature type="chain" id="PRO_0000177697" description="Peptide chain release factor 1">
    <location>
        <begin position="1"/>
        <end position="363"/>
    </location>
</feature>
<feature type="modified residue" description="N5-methylglutamine" evidence="1">
    <location>
        <position position="237"/>
    </location>
</feature>
<reference key="1">
    <citation type="submission" date="2004-06" db="EMBL/GenBank/DDBJ databases">
        <authorList>
            <person name="Birren B.W."/>
            <person name="Stange-Thomann N."/>
            <person name="Hafez N."/>
            <person name="DeCaprio D."/>
            <person name="Fisher S."/>
            <person name="Butler J."/>
            <person name="Elkins T."/>
            <person name="Kodira C.D."/>
            <person name="Major J."/>
            <person name="Wang S."/>
            <person name="Nicol R."/>
            <person name="Nusbaum C."/>
        </authorList>
    </citation>
    <scope>NUCLEOTIDE SEQUENCE [LARGE SCALE GENOMIC DNA]</scope>
    <source>
        <strain>ATCC 33453 / NBRC 100688 / NCTC 11704 / L1</strain>
    </source>
</reference>
<comment type="function">
    <text evidence="1">Peptide chain release factor 1 directs the termination of translation in response to the peptide chain termination codons UAG and UAA.</text>
</comment>
<comment type="subcellular location">
    <subcellularLocation>
        <location evidence="1">Cytoplasm</location>
    </subcellularLocation>
</comment>
<comment type="PTM">
    <text evidence="1">Methylated by PrmC. Methylation increases the termination efficiency of RF1.</text>
</comment>
<comment type="similarity">
    <text evidence="1">Belongs to the prokaryotic/mitochondrial release factor family.</text>
</comment>
<name>RF1_MESFL</name>
<gene>
    <name evidence="1" type="primary">prfA</name>
    <name type="ordered locus">Mfl634</name>
</gene>
<sequence length="363" mass="40688">MNPKTYEALETMQKRVDQIDKDLQSEEIVSDVKKMLELNKERANLIEVVEKFIEYKTIIQSIADAKEILGNEKDAEMIELAKMELSENEDAVEPIVAIIEELLLPKDPNDDKNVIVEIRGAAGGDEANIFAGDLLRMYKLYAETQNWKITMLDANSSEAGGFSQVSFMVKGDRVYSKLKFESGAHRVQRVPKTEAKGRIQTSTATVAVLPEMSDVEIEIKNSDLRIDTYRSSGAGGQHVNTTDSAVRITHIPTGVVAASQDGRSQHDNKDIAMTMLRARIYEAELEKQQAEADATRKNAVGTGARSEKIRTYNYPQNRVTDHRVGLTLNKLDQVMEGKIDDFIIALVNDEQRQKVEAQLQDNE</sequence>
<proteinExistence type="inferred from homology"/>
<accession>Q6F0I3</accession>
<evidence type="ECO:0000255" key="1">
    <source>
        <dbReference type="HAMAP-Rule" id="MF_00093"/>
    </source>
</evidence>
<dbReference type="EMBL" id="AE017263">
    <property type="protein sequence ID" value="AAT75990.1"/>
    <property type="molecule type" value="Genomic_DNA"/>
</dbReference>
<dbReference type="RefSeq" id="WP_011183530.1">
    <property type="nucleotide sequence ID" value="NC_006055.1"/>
</dbReference>
<dbReference type="RefSeq" id="YP_053874.1">
    <property type="nucleotide sequence ID" value="NC_006055.1"/>
</dbReference>
<dbReference type="SMR" id="Q6F0I3"/>
<dbReference type="STRING" id="265311.Mfl634"/>
<dbReference type="PaxDb" id="265311-Mfl634"/>
<dbReference type="EnsemblBacteria" id="AAT75990">
    <property type="protein sequence ID" value="AAT75990"/>
    <property type="gene ID" value="Mfl634"/>
</dbReference>
<dbReference type="GeneID" id="2897719"/>
<dbReference type="KEGG" id="mfl:Mfl634"/>
<dbReference type="PATRIC" id="fig|265311.5.peg.636"/>
<dbReference type="eggNOG" id="COG0216">
    <property type="taxonomic scope" value="Bacteria"/>
</dbReference>
<dbReference type="HOGENOM" id="CLU_036856_0_1_14"/>
<dbReference type="OrthoDB" id="9806673at2"/>
<dbReference type="Proteomes" id="UP000006647">
    <property type="component" value="Chromosome"/>
</dbReference>
<dbReference type="GO" id="GO:0005737">
    <property type="term" value="C:cytoplasm"/>
    <property type="evidence" value="ECO:0007669"/>
    <property type="project" value="UniProtKB-SubCell"/>
</dbReference>
<dbReference type="GO" id="GO:0016149">
    <property type="term" value="F:translation release factor activity, codon specific"/>
    <property type="evidence" value="ECO:0007669"/>
    <property type="project" value="UniProtKB-UniRule"/>
</dbReference>
<dbReference type="FunFam" id="3.30.160.20:FF:000004">
    <property type="entry name" value="Peptide chain release factor 1"/>
    <property type="match status" value="1"/>
</dbReference>
<dbReference type="FunFam" id="3.30.70.1660:FF:000002">
    <property type="entry name" value="Peptide chain release factor 1"/>
    <property type="match status" value="1"/>
</dbReference>
<dbReference type="FunFam" id="3.30.70.1660:FF:000004">
    <property type="entry name" value="Peptide chain release factor 1"/>
    <property type="match status" value="1"/>
</dbReference>
<dbReference type="Gene3D" id="3.30.160.20">
    <property type="match status" value="1"/>
</dbReference>
<dbReference type="Gene3D" id="3.30.70.1660">
    <property type="match status" value="1"/>
</dbReference>
<dbReference type="Gene3D" id="6.10.140.1950">
    <property type="match status" value="1"/>
</dbReference>
<dbReference type="HAMAP" id="MF_00093">
    <property type="entry name" value="Rel_fac_1"/>
    <property type="match status" value="1"/>
</dbReference>
<dbReference type="InterPro" id="IPR005139">
    <property type="entry name" value="PCRF"/>
</dbReference>
<dbReference type="InterPro" id="IPR000352">
    <property type="entry name" value="Pep_chain_release_fac_I"/>
</dbReference>
<dbReference type="InterPro" id="IPR045853">
    <property type="entry name" value="Pep_chain_release_fac_I_sf"/>
</dbReference>
<dbReference type="InterPro" id="IPR050057">
    <property type="entry name" value="Prokaryotic/Mito_RF"/>
</dbReference>
<dbReference type="InterPro" id="IPR004373">
    <property type="entry name" value="RF-1"/>
</dbReference>
<dbReference type="NCBIfam" id="TIGR00019">
    <property type="entry name" value="prfA"/>
    <property type="match status" value="1"/>
</dbReference>
<dbReference type="NCBIfam" id="NF001859">
    <property type="entry name" value="PRK00591.1"/>
    <property type="match status" value="1"/>
</dbReference>
<dbReference type="PANTHER" id="PTHR43804">
    <property type="entry name" value="LD18447P"/>
    <property type="match status" value="1"/>
</dbReference>
<dbReference type="PANTHER" id="PTHR43804:SF7">
    <property type="entry name" value="LD18447P"/>
    <property type="match status" value="1"/>
</dbReference>
<dbReference type="Pfam" id="PF03462">
    <property type="entry name" value="PCRF"/>
    <property type="match status" value="1"/>
</dbReference>
<dbReference type="Pfam" id="PF00472">
    <property type="entry name" value="RF-1"/>
    <property type="match status" value="1"/>
</dbReference>
<dbReference type="SMART" id="SM00937">
    <property type="entry name" value="PCRF"/>
    <property type="match status" value="1"/>
</dbReference>
<dbReference type="SUPFAM" id="SSF75620">
    <property type="entry name" value="Release factor"/>
    <property type="match status" value="1"/>
</dbReference>
<dbReference type="PROSITE" id="PS00745">
    <property type="entry name" value="RF_PROK_I"/>
    <property type="match status" value="1"/>
</dbReference>
<protein>
    <recommendedName>
        <fullName evidence="1">Peptide chain release factor 1</fullName>
        <shortName evidence="1">RF-1</shortName>
    </recommendedName>
</protein>